<feature type="chain" id="PRO_1000188639" description="tRNA-cytidine(32) 2-sulfurtransferase">
    <location>
        <begin position="1"/>
        <end position="311"/>
    </location>
</feature>
<feature type="short sequence motif" description="PP-loop motif" evidence="1">
    <location>
        <begin position="47"/>
        <end position="52"/>
    </location>
</feature>
<feature type="binding site" evidence="1">
    <location>
        <position position="122"/>
    </location>
    <ligand>
        <name>[4Fe-4S] cluster</name>
        <dbReference type="ChEBI" id="CHEBI:49883"/>
    </ligand>
</feature>
<feature type="binding site" evidence="1">
    <location>
        <position position="125"/>
    </location>
    <ligand>
        <name>[4Fe-4S] cluster</name>
        <dbReference type="ChEBI" id="CHEBI:49883"/>
    </ligand>
</feature>
<feature type="binding site" evidence="1">
    <location>
        <position position="213"/>
    </location>
    <ligand>
        <name>[4Fe-4S] cluster</name>
        <dbReference type="ChEBI" id="CHEBI:49883"/>
    </ligand>
</feature>
<accession>B7LYL5</accession>
<keyword id="KW-0004">4Fe-4S</keyword>
<keyword id="KW-0067">ATP-binding</keyword>
<keyword id="KW-0963">Cytoplasm</keyword>
<keyword id="KW-0408">Iron</keyword>
<keyword id="KW-0411">Iron-sulfur</keyword>
<keyword id="KW-0460">Magnesium</keyword>
<keyword id="KW-0479">Metal-binding</keyword>
<keyword id="KW-0547">Nucleotide-binding</keyword>
<keyword id="KW-0694">RNA-binding</keyword>
<keyword id="KW-0808">Transferase</keyword>
<keyword id="KW-0819">tRNA processing</keyword>
<keyword id="KW-0820">tRNA-binding</keyword>
<sequence length="311" mass="35460">MSQNQEISKKEQYNLNKLQKRLRRNVGEAIADFNMIEEGDRIMVCLSGGKDSYTMLEILRNLQQSAPINFSLVAVNLDQKQPGFPEHVLPEYLEKLGVEYKIVEENTYGIVKEKIPEGKTTCSLCSRLRRGILYRTATELGATKIALGHHRDDILQTLFLNMFYGGKMKGMPPKLMSDDGKHIVIRPLAYCREKDIQRFADAKAFPIIPCNLCGSQPNLQRQVIADMLRDWDKRYPGRIETMFSAMQNVVPSHLCDTNLFDFKGITHGSEVVNGGDLAFDREEIPLQPAGWQPEEDENQLDELRLNVVEVK</sequence>
<comment type="function">
    <text evidence="1">Catalyzes the ATP-dependent 2-thiolation of cytidine in position 32 of tRNA, to form 2-thiocytidine (s(2)C32). The sulfur atoms are provided by the cysteine/cysteine desulfurase (IscS) system.</text>
</comment>
<comment type="catalytic activity">
    <reaction evidence="1">
        <text>cytidine(32) in tRNA + S-sulfanyl-L-cysteinyl-[cysteine desulfurase] + AH2 + ATP = 2-thiocytidine(32) in tRNA + L-cysteinyl-[cysteine desulfurase] + A + AMP + diphosphate + H(+)</text>
        <dbReference type="Rhea" id="RHEA:57048"/>
        <dbReference type="Rhea" id="RHEA-COMP:10288"/>
        <dbReference type="Rhea" id="RHEA-COMP:12157"/>
        <dbReference type="Rhea" id="RHEA-COMP:12158"/>
        <dbReference type="Rhea" id="RHEA-COMP:14821"/>
        <dbReference type="ChEBI" id="CHEBI:13193"/>
        <dbReference type="ChEBI" id="CHEBI:15378"/>
        <dbReference type="ChEBI" id="CHEBI:17499"/>
        <dbReference type="ChEBI" id="CHEBI:29950"/>
        <dbReference type="ChEBI" id="CHEBI:30616"/>
        <dbReference type="ChEBI" id="CHEBI:33019"/>
        <dbReference type="ChEBI" id="CHEBI:61963"/>
        <dbReference type="ChEBI" id="CHEBI:82748"/>
        <dbReference type="ChEBI" id="CHEBI:141453"/>
        <dbReference type="ChEBI" id="CHEBI:456215"/>
    </reaction>
    <physiologicalReaction direction="left-to-right" evidence="1">
        <dbReference type="Rhea" id="RHEA:57049"/>
    </physiologicalReaction>
</comment>
<comment type="cofactor">
    <cofactor evidence="1">
        <name>Mg(2+)</name>
        <dbReference type="ChEBI" id="CHEBI:18420"/>
    </cofactor>
</comment>
<comment type="cofactor">
    <cofactor evidence="1">
        <name>[4Fe-4S] cluster</name>
        <dbReference type="ChEBI" id="CHEBI:49883"/>
    </cofactor>
    <text evidence="1">Binds 1 [4Fe-4S] cluster per subunit. The cluster is chelated by three Cys residues, the fourth Fe has a free coordination site that may bind a sulfur atom transferred from the persulfide of IscS.</text>
</comment>
<comment type="pathway">
    <text evidence="1">tRNA modification.</text>
</comment>
<comment type="subunit">
    <text evidence="1">Homodimer.</text>
</comment>
<comment type="subcellular location">
    <subcellularLocation>
        <location evidence="1">Cytoplasm</location>
    </subcellularLocation>
</comment>
<comment type="miscellaneous">
    <text evidence="1">The thiolation reaction likely consists of two steps: a first activation step by ATP to form an adenylated intermediate of the target base of tRNA, and a second nucleophilic substitution step of the sulfur (S) atom supplied by the hydrosulfide attached to the Fe-S cluster.</text>
</comment>
<comment type="similarity">
    <text evidence="1">Belongs to the TtcA family.</text>
</comment>
<dbReference type="EC" id="2.8.1.-" evidence="1"/>
<dbReference type="EMBL" id="CU928160">
    <property type="protein sequence ID" value="CAQ98233.1"/>
    <property type="molecule type" value="Genomic_DNA"/>
</dbReference>
<dbReference type="RefSeq" id="WP_000081418.1">
    <property type="nucleotide sequence ID" value="NC_011741.1"/>
</dbReference>
<dbReference type="SMR" id="B7LYL5"/>
<dbReference type="GeneID" id="75171471"/>
<dbReference type="KEGG" id="ecr:ECIAI1_1374"/>
<dbReference type="HOGENOM" id="CLU_026481_0_0_6"/>
<dbReference type="GO" id="GO:0005737">
    <property type="term" value="C:cytoplasm"/>
    <property type="evidence" value="ECO:0007669"/>
    <property type="project" value="UniProtKB-SubCell"/>
</dbReference>
<dbReference type="GO" id="GO:0051539">
    <property type="term" value="F:4 iron, 4 sulfur cluster binding"/>
    <property type="evidence" value="ECO:0007669"/>
    <property type="project" value="UniProtKB-UniRule"/>
</dbReference>
<dbReference type="GO" id="GO:0005524">
    <property type="term" value="F:ATP binding"/>
    <property type="evidence" value="ECO:0007669"/>
    <property type="project" value="UniProtKB-UniRule"/>
</dbReference>
<dbReference type="GO" id="GO:0000287">
    <property type="term" value="F:magnesium ion binding"/>
    <property type="evidence" value="ECO:0007669"/>
    <property type="project" value="UniProtKB-UniRule"/>
</dbReference>
<dbReference type="GO" id="GO:0016783">
    <property type="term" value="F:sulfurtransferase activity"/>
    <property type="evidence" value="ECO:0007669"/>
    <property type="project" value="UniProtKB-UniRule"/>
</dbReference>
<dbReference type="GO" id="GO:0000049">
    <property type="term" value="F:tRNA binding"/>
    <property type="evidence" value="ECO:0007669"/>
    <property type="project" value="UniProtKB-KW"/>
</dbReference>
<dbReference type="GO" id="GO:0034227">
    <property type="term" value="P:tRNA thio-modification"/>
    <property type="evidence" value="ECO:0007669"/>
    <property type="project" value="UniProtKB-UniRule"/>
</dbReference>
<dbReference type="CDD" id="cd24138">
    <property type="entry name" value="TtcA-like"/>
    <property type="match status" value="1"/>
</dbReference>
<dbReference type="FunFam" id="3.40.50.620:FF:000046">
    <property type="entry name" value="tRNA-cytidine(32) 2-sulfurtransferase"/>
    <property type="match status" value="1"/>
</dbReference>
<dbReference type="Gene3D" id="3.40.50.620">
    <property type="entry name" value="HUPs"/>
    <property type="match status" value="1"/>
</dbReference>
<dbReference type="HAMAP" id="MF_01850">
    <property type="entry name" value="TtcA"/>
    <property type="match status" value="1"/>
</dbReference>
<dbReference type="InterPro" id="IPR014729">
    <property type="entry name" value="Rossmann-like_a/b/a_fold"/>
</dbReference>
<dbReference type="InterPro" id="IPR011063">
    <property type="entry name" value="TilS/TtcA_N"/>
</dbReference>
<dbReference type="InterPro" id="IPR012089">
    <property type="entry name" value="tRNA_Cyd_32_2_STrfase"/>
</dbReference>
<dbReference type="InterPro" id="IPR035107">
    <property type="entry name" value="tRNA_thiolation_TtcA_Ctu1"/>
</dbReference>
<dbReference type="NCBIfam" id="NF007972">
    <property type="entry name" value="PRK10696.1"/>
    <property type="match status" value="1"/>
</dbReference>
<dbReference type="PANTHER" id="PTHR43686:SF1">
    <property type="entry name" value="AMINOTRAN_5 DOMAIN-CONTAINING PROTEIN"/>
    <property type="match status" value="1"/>
</dbReference>
<dbReference type="PANTHER" id="PTHR43686">
    <property type="entry name" value="SULFURTRANSFERASE-RELATED"/>
    <property type="match status" value="1"/>
</dbReference>
<dbReference type="Pfam" id="PF01171">
    <property type="entry name" value="ATP_bind_3"/>
    <property type="match status" value="1"/>
</dbReference>
<dbReference type="PIRSF" id="PIRSF004976">
    <property type="entry name" value="ATPase_YdaO"/>
    <property type="match status" value="1"/>
</dbReference>
<dbReference type="SUPFAM" id="SSF52402">
    <property type="entry name" value="Adenine nucleotide alpha hydrolases-like"/>
    <property type="match status" value="1"/>
</dbReference>
<organism>
    <name type="scientific">Escherichia coli O8 (strain IAI1)</name>
    <dbReference type="NCBI Taxonomy" id="585034"/>
    <lineage>
        <taxon>Bacteria</taxon>
        <taxon>Pseudomonadati</taxon>
        <taxon>Pseudomonadota</taxon>
        <taxon>Gammaproteobacteria</taxon>
        <taxon>Enterobacterales</taxon>
        <taxon>Enterobacteriaceae</taxon>
        <taxon>Escherichia</taxon>
    </lineage>
</organism>
<evidence type="ECO:0000255" key="1">
    <source>
        <dbReference type="HAMAP-Rule" id="MF_01850"/>
    </source>
</evidence>
<reference key="1">
    <citation type="journal article" date="2009" name="PLoS Genet.">
        <title>Organised genome dynamics in the Escherichia coli species results in highly diverse adaptive paths.</title>
        <authorList>
            <person name="Touchon M."/>
            <person name="Hoede C."/>
            <person name="Tenaillon O."/>
            <person name="Barbe V."/>
            <person name="Baeriswyl S."/>
            <person name="Bidet P."/>
            <person name="Bingen E."/>
            <person name="Bonacorsi S."/>
            <person name="Bouchier C."/>
            <person name="Bouvet O."/>
            <person name="Calteau A."/>
            <person name="Chiapello H."/>
            <person name="Clermont O."/>
            <person name="Cruveiller S."/>
            <person name="Danchin A."/>
            <person name="Diard M."/>
            <person name="Dossat C."/>
            <person name="Karoui M.E."/>
            <person name="Frapy E."/>
            <person name="Garry L."/>
            <person name="Ghigo J.M."/>
            <person name="Gilles A.M."/>
            <person name="Johnson J."/>
            <person name="Le Bouguenec C."/>
            <person name="Lescat M."/>
            <person name="Mangenot S."/>
            <person name="Martinez-Jehanne V."/>
            <person name="Matic I."/>
            <person name="Nassif X."/>
            <person name="Oztas S."/>
            <person name="Petit M.A."/>
            <person name="Pichon C."/>
            <person name="Rouy Z."/>
            <person name="Ruf C.S."/>
            <person name="Schneider D."/>
            <person name="Tourret J."/>
            <person name="Vacherie B."/>
            <person name="Vallenet D."/>
            <person name="Medigue C."/>
            <person name="Rocha E.P.C."/>
            <person name="Denamur E."/>
        </authorList>
    </citation>
    <scope>NUCLEOTIDE SEQUENCE [LARGE SCALE GENOMIC DNA]</scope>
    <source>
        <strain>IAI1</strain>
    </source>
</reference>
<protein>
    <recommendedName>
        <fullName evidence="1">tRNA-cytidine(32) 2-sulfurtransferase</fullName>
        <ecNumber evidence="1">2.8.1.-</ecNumber>
    </recommendedName>
    <alternativeName>
        <fullName evidence="1">Two-thiocytidine biosynthesis protein A</fullName>
    </alternativeName>
    <alternativeName>
        <fullName evidence="1">tRNA 2-thiocytidine biosynthesis protein TtcA</fullName>
    </alternativeName>
</protein>
<gene>
    <name evidence="1" type="primary">ttcA</name>
    <name type="ordered locus">ECIAI1_1374</name>
</gene>
<proteinExistence type="inferred from homology"/>
<name>TTCA_ECO8A</name>